<keyword id="KW-0325">Glycoprotein</keyword>
<keyword id="KW-0326">Glycosidase</keyword>
<keyword id="KW-0378">Hydrolase</keyword>
<keyword id="KW-0732">Signal</keyword>
<name>INV1_WICAO</name>
<accession>P40912</accession>
<dbReference type="EC" id="3.2.1.26"/>
<dbReference type="EMBL" id="X80640">
    <property type="protein sequence ID" value="CAA56684.1"/>
    <property type="molecule type" value="Genomic_DNA"/>
</dbReference>
<dbReference type="PIR" id="S65753">
    <property type="entry name" value="S65753"/>
</dbReference>
<dbReference type="SMR" id="P40912"/>
<dbReference type="CAZy" id="GH32">
    <property type="family name" value="Glycoside Hydrolase Family 32"/>
</dbReference>
<dbReference type="GlyCosmos" id="P40912">
    <property type="glycosylation" value="10 sites, No reported glycans"/>
</dbReference>
<dbReference type="BRENDA" id="3.2.1.26">
    <property type="organism ID" value="1135"/>
</dbReference>
<dbReference type="GO" id="GO:0005576">
    <property type="term" value="C:extracellular region"/>
    <property type="evidence" value="ECO:0007669"/>
    <property type="project" value="UniProtKB-ARBA"/>
</dbReference>
<dbReference type="GO" id="GO:0000324">
    <property type="term" value="C:fungal-type vacuole"/>
    <property type="evidence" value="ECO:0007669"/>
    <property type="project" value="TreeGrafter"/>
</dbReference>
<dbReference type="GO" id="GO:0004575">
    <property type="term" value="F:sucrose alpha-glucosidase activity"/>
    <property type="evidence" value="ECO:0007669"/>
    <property type="project" value="TreeGrafter"/>
</dbReference>
<dbReference type="GO" id="GO:0005987">
    <property type="term" value="P:sucrose catabolic process"/>
    <property type="evidence" value="ECO:0007669"/>
    <property type="project" value="UniProtKB-ARBA"/>
</dbReference>
<dbReference type="CDD" id="cd18622">
    <property type="entry name" value="GH32_Inu-like"/>
    <property type="match status" value="1"/>
</dbReference>
<dbReference type="FunFam" id="2.115.10.20:FF:000002">
    <property type="entry name" value="Invertase 2"/>
    <property type="match status" value="1"/>
</dbReference>
<dbReference type="Gene3D" id="2.60.120.560">
    <property type="entry name" value="Exo-inulinase, domain 1"/>
    <property type="match status" value="1"/>
</dbReference>
<dbReference type="Gene3D" id="2.115.10.20">
    <property type="entry name" value="Glycosyl hydrolase domain, family 43"/>
    <property type="match status" value="1"/>
</dbReference>
<dbReference type="InterPro" id="IPR013320">
    <property type="entry name" value="ConA-like_dom_sf"/>
</dbReference>
<dbReference type="InterPro" id="IPR001362">
    <property type="entry name" value="Glyco_hydro_32"/>
</dbReference>
<dbReference type="InterPro" id="IPR018053">
    <property type="entry name" value="Glyco_hydro_32_AS"/>
</dbReference>
<dbReference type="InterPro" id="IPR013189">
    <property type="entry name" value="Glyco_hydro_32_C"/>
</dbReference>
<dbReference type="InterPro" id="IPR013148">
    <property type="entry name" value="Glyco_hydro_32_N"/>
</dbReference>
<dbReference type="InterPro" id="IPR023296">
    <property type="entry name" value="Glyco_hydro_beta-prop_sf"/>
</dbReference>
<dbReference type="PANTHER" id="PTHR42800">
    <property type="entry name" value="EXOINULINASE INUD (AFU_ORTHOLOGUE AFUA_5G00480)"/>
    <property type="match status" value="1"/>
</dbReference>
<dbReference type="PANTHER" id="PTHR42800:SF4">
    <property type="entry name" value="INVERTASE 2"/>
    <property type="match status" value="1"/>
</dbReference>
<dbReference type="Pfam" id="PF08244">
    <property type="entry name" value="Glyco_hydro_32C"/>
    <property type="match status" value="1"/>
</dbReference>
<dbReference type="Pfam" id="PF00251">
    <property type="entry name" value="Glyco_hydro_32N"/>
    <property type="match status" value="1"/>
</dbReference>
<dbReference type="SMART" id="SM00640">
    <property type="entry name" value="Glyco_32"/>
    <property type="match status" value="1"/>
</dbReference>
<dbReference type="SUPFAM" id="SSF75005">
    <property type="entry name" value="Arabinanase/levansucrase/invertase"/>
    <property type="match status" value="1"/>
</dbReference>
<dbReference type="SUPFAM" id="SSF49899">
    <property type="entry name" value="Concanavalin A-like lectins/glucanases"/>
    <property type="match status" value="1"/>
</dbReference>
<dbReference type="PROSITE" id="PS00609">
    <property type="entry name" value="GLYCOSYL_HYDROL_F32"/>
    <property type="match status" value="1"/>
</dbReference>
<comment type="catalytic activity">
    <reaction evidence="3">
        <text>Hydrolysis of terminal non-reducing beta-D-fructofuranoside residues in beta-D-fructofuranosides.</text>
        <dbReference type="EC" id="3.2.1.26"/>
    </reaction>
</comment>
<comment type="similarity">
    <text evidence="4">Belongs to the glycosyl hydrolase 32 family.</text>
</comment>
<organism>
    <name type="scientific">Wickerhamomyces anomalus</name>
    <name type="common">Yeast</name>
    <name type="synonym">Hansenula anomala</name>
    <dbReference type="NCBI Taxonomy" id="4927"/>
    <lineage>
        <taxon>Eukaryota</taxon>
        <taxon>Fungi</taxon>
        <taxon>Dikarya</taxon>
        <taxon>Ascomycota</taxon>
        <taxon>Saccharomycotina</taxon>
        <taxon>Saccharomycetes</taxon>
        <taxon>Phaffomycetales</taxon>
        <taxon>Wickerhamomycetaceae</taxon>
        <taxon>Wickerhamomyces</taxon>
    </lineage>
</organism>
<proteinExistence type="inferred from homology"/>
<sequence length="550" mass="63188">MIQLSPLLLLPLFSVFNSIADASTEYLRPQIHLTPDQGWMNDPNGMFYDRKDKLWHVYFQHNPDKKSIWATPVTWGHSTSKDLLTWDYHGNALEPENDDEGIFSGSVVVDRNNTSGFFNDSTDPEQRIVAIYTNNAQLQTQEIAYSLDKGYSFIKYDQNPVINVNSSQQRDPKVLWHDESNQWIMVVAKTQEFKVQIYGSPDLKKWDLKSNFTSNGYLGFQYECPGLFKLPIENPLNDTVTSKWVLLLAINPGSPLGGSINEYFIGDFDGTTFHPDDGATRFMDIGKDFYAFQSFDNTEPEDGALGLAWASNWQYANTVPTENWRSSMSLVRNYTLKYVDVNPENYGLTLIQKPVYDTKETRLNETLKTLETINEYEVNDLKLDKSSFVATDFNTERNATGVFEFDLKFTQTDLKMGYSNMTTQFGLYIHSQTVKGSQETLQLVFDTLSTTWYIDRTTQHSFQRNSPVFTERISTYVEKIDTTDQGNVYTLYGVVDRNILELYFNDGSIAMTNTFFFREGKIPTSFEVVCDSEKSFITIDELSVRELARK</sequence>
<reference key="1">
    <citation type="journal article" date="1996" name="Curr. Genet.">
        <title>Cloning and sequence analysis of the invertase gene INV 1 from the yeast Pichia anomala.</title>
        <authorList>
            <person name="Perez J.A."/>
            <person name="Rodriguez J."/>
            <person name="Rodriguez L."/>
            <person name="Ruiz T."/>
        </authorList>
    </citation>
    <scope>NUCLEOTIDE SEQUENCE [GENOMIC DNA]</scope>
</reference>
<feature type="signal peptide" evidence="2">
    <location>
        <begin position="1"/>
        <end position="22"/>
    </location>
</feature>
<feature type="chain" id="PRO_0000033395" description="Invertase">
    <location>
        <begin position="23"/>
        <end position="550"/>
    </location>
</feature>
<feature type="active site" evidence="3">
    <location>
        <position position="42"/>
    </location>
</feature>
<feature type="binding site" evidence="1">
    <location>
        <begin position="39"/>
        <end position="42"/>
    </location>
    <ligand>
        <name>substrate</name>
    </ligand>
</feature>
<feature type="binding site" evidence="1">
    <location>
        <position position="60"/>
    </location>
    <ligand>
        <name>substrate</name>
    </ligand>
</feature>
<feature type="binding site" evidence="1">
    <location>
        <begin position="103"/>
        <end position="104"/>
    </location>
    <ligand>
        <name>substrate</name>
    </ligand>
</feature>
<feature type="binding site" evidence="1">
    <location>
        <begin position="170"/>
        <end position="171"/>
    </location>
    <ligand>
        <name>substrate</name>
    </ligand>
</feature>
<feature type="binding site" evidence="1">
    <location>
        <position position="223"/>
    </location>
    <ligand>
        <name>substrate</name>
    </ligand>
</feature>
<feature type="binding site" evidence="1">
    <location>
        <position position="313"/>
    </location>
    <ligand>
        <name>substrate</name>
    </ligand>
</feature>
<feature type="glycosylation site" description="N-linked (GlcNAc...) asparagine" evidence="2">
    <location>
        <position position="112"/>
    </location>
</feature>
<feature type="glycosylation site" description="N-linked (GlcNAc...) asparagine" evidence="2">
    <location>
        <position position="113"/>
    </location>
</feature>
<feature type="glycosylation site" description="N-linked (GlcNAc...) asparagine" evidence="2">
    <location>
        <position position="119"/>
    </location>
</feature>
<feature type="glycosylation site" description="N-linked (GlcNAc...) asparagine" evidence="2">
    <location>
        <position position="165"/>
    </location>
</feature>
<feature type="glycosylation site" description="N-linked (GlcNAc...) asparagine" evidence="2">
    <location>
        <position position="211"/>
    </location>
</feature>
<feature type="glycosylation site" description="N-linked (GlcNAc...) asparagine" evidence="2">
    <location>
        <position position="237"/>
    </location>
</feature>
<feature type="glycosylation site" description="N-linked (GlcNAc...) asparagine" evidence="2">
    <location>
        <position position="333"/>
    </location>
</feature>
<feature type="glycosylation site" description="N-linked (GlcNAc...) asparagine" evidence="2">
    <location>
        <position position="364"/>
    </location>
</feature>
<feature type="glycosylation site" description="N-linked (GlcNAc...) asparagine" evidence="2">
    <location>
        <position position="398"/>
    </location>
</feature>
<feature type="glycosylation site" description="N-linked (GlcNAc...) asparagine" evidence="2">
    <location>
        <position position="420"/>
    </location>
</feature>
<gene>
    <name type="primary">INV1</name>
</gene>
<protein>
    <recommendedName>
        <fullName>Invertase</fullName>
        <ecNumber>3.2.1.26</ecNumber>
    </recommendedName>
    <alternativeName>
        <fullName>Beta-fructofuranosidase 2</fullName>
    </alternativeName>
    <alternativeName>
        <fullName>Saccharase</fullName>
    </alternativeName>
</protein>
<evidence type="ECO:0000250" key="1"/>
<evidence type="ECO:0000255" key="2"/>
<evidence type="ECO:0000255" key="3">
    <source>
        <dbReference type="PROSITE-ProRule" id="PRU10067"/>
    </source>
</evidence>
<evidence type="ECO:0000305" key="4"/>